<accession>A6L1Z3</accession>
<keyword id="KW-0012">Acyltransferase</keyword>
<keyword id="KW-0028">Amino-acid biosynthesis</keyword>
<keyword id="KW-0963">Cytoplasm</keyword>
<keyword id="KW-0486">Methionine biosynthesis</keyword>
<keyword id="KW-0808">Transferase</keyword>
<dbReference type="EC" id="2.3.1.31" evidence="1"/>
<dbReference type="EMBL" id="CP000139">
    <property type="protein sequence ID" value="ABR39707.1"/>
    <property type="molecule type" value="Genomic_DNA"/>
</dbReference>
<dbReference type="SMR" id="A6L1Z3"/>
<dbReference type="STRING" id="435590.BVU_2042"/>
<dbReference type="PaxDb" id="435590-BVU_2042"/>
<dbReference type="GeneID" id="5303007"/>
<dbReference type="KEGG" id="bvu:BVU_2042"/>
<dbReference type="eggNOG" id="COG1897">
    <property type="taxonomic scope" value="Bacteria"/>
</dbReference>
<dbReference type="HOGENOM" id="CLU_057851_0_1_10"/>
<dbReference type="BioCyc" id="BVUL435590:G1G59-2134-MONOMER"/>
<dbReference type="UniPathway" id="UPA00051">
    <property type="reaction ID" value="UER00074"/>
</dbReference>
<dbReference type="Proteomes" id="UP000002861">
    <property type="component" value="Chromosome"/>
</dbReference>
<dbReference type="GO" id="GO:0005737">
    <property type="term" value="C:cytoplasm"/>
    <property type="evidence" value="ECO:0007669"/>
    <property type="project" value="UniProtKB-SubCell"/>
</dbReference>
<dbReference type="GO" id="GO:0004414">
    <property type="term" value="F:homoserine O-acetyltransferase activity"/>
    <property type="evidence" value="ECO:0007669"/>
    <property type="project" value="UniProtKB-EC"/>
</dbReference>
<dbReference type="GO" id="GO:0008899">
    <property type="term" value="F:homoserine O-succinyltransferase activity"/>
    <property type="evidence" value="ECO:0007669"/>
    <property type="project" value="UniProtKB-UniRule"/>
</dbReference>
<dbReference type="GO" id="GO:0019281">
    <property type="term" value="P:L-methionine biosynthetic process from homoserine via O-succinyl-L-homoserine and cystathionine"/>
    <property type="evidence" value="ECO:0007669"/>
    <property type="project" value="InterPro"/>
</dbReference>
<dbReference type="CDD" id="cd03131">
    <property type="entry name" value="GATase1_HTS"/>
    <property type="match status" value="1"/>
</dbReference>
<dbReference type="FunFam" id="3.40.50.880:FF:000004">
    <property type="entry name" value="Homoserine O-succinyltransferase"/>
    <property type="match status" value="1"/>
</dbReference>
<dbReference type="Gene3D" id="3.40.50.880">
    <property type="match status" value="1"/>
</dbReference>
<dbReference type="HAMAP" id="MF_00295">
    <property type="entry name" value="MetA_acyltransf"/>
    <property type="match status" value="1"/>
</dbReference>
<dbReference type="InterPro" id="IPR029062">
    <property type="entry name" value="Class_I_gatase-like"/>
</dbReference>
<dbReference type="InterPro" id="IPR005697">
    <property type="entry name" value="HST_MetA"/>
</dbReference>
<dbReference type="InterPro" id="IPR033752">
    <property type="entry name" value="MetA_family"/>
</dbReference>
<dbReference type="NCBIfam" id="TIGR01001">
    <property type="entry name" value="metA"/>
    <property type="match status" value="1"/>
</dbReference>
<dbReference type="PANTHER" id="PTHR20919">
    <property type="entry name" value="HOMOSERINE O-SUCCINYLTRANSFERASE"/>
    <property type="match status" value="1"/>
</dbReference>
<dbReference type="PANTHER" id="PTHR20919:SF0">
    <property type="entry name" value="HOMOSERINE O-SUCCINYLTRANSFERASE"/>
    <property type="match status" value="1"/>
</dbReference>
<dbReference type="Pfam" id="PF04204">
    <property type="entry name" value="HTS"/>
    <property type="match status" value="1"/>
</dbReference>
<dbReference type="PIRSF" id="PIRSF000450">
    <property type="entry name" value="H_ser_succinyltr"/>
    <property type="match status" value="1"/>
</dbReference>
<dbReference type="SUPFAM" id="SSF52317">
    <property type="entry name" value="Class I glutamine amidotransferase-like"/>
    <property type="match status" value="1"/>
</dbReference>
<comment type="function">
    <text evidence="1">Transfers an acetyl group from acetyl-CoA to L-homoserine, forming acetyl-L-homoserine.</text>
</comment>
<comment type="catalytic activity">
    <reaction evidence="1">
        <text>L-homoserine + acetyl-CoA = O-acetyl-L-homoserine + CoA</text>
        <dbReference type="Rhea" id="RHEA:13701"/>
        <dbReference type="ChEBI" id="CHEBI:57287"/>
        <dbReference type="ChEBI" id="CHEBI:57288"/>
        <dbReference type="ChEBI" id="CHEBI:57476"/>
        <dbReference type="ChEBI" id="CHEBI:57716"/>
        <dbReference type="EC" id="2.3.1.31"/>
    </reaction>
</comment>
<comment type="pathway">
    <text evidence="1">Amino-acid biosynthesis; L-methionine biosynthesis via de novo pathway; O-acetyl-L-homoserine from L-homoserine: step 1/1.</text>
</comment>
<comment type="subcellular location">
    <subcellularLocation>
        <location evidence="1">Cytoplasm</location>
    </subcellularLocation>
</comment>
<comment type="similarity">
    <text evidence="1">Belongs to the MetA family.</text>
</comment>
<organism>
    <name type="scientific">Phocaeicola vulgatus (strain ATCC 8482 / DSM 1447 / JCM 5826 / CCUG 4940 / NBRC 14291 / NCTC 11154)</name>
    <name type="common">Bacteroides vulgatus</name>
    <dbReference type="NCBI Taxonomy" id="435590"/>
    <lineage>
        <taxon>Bacteria</taxon>
        <taxon>Pseudomonadati</taxon>
        <taxon>Bacteroidota</taxon>
        <taxon>Bacteroidia</taxon>
        <taxon>Bacteroidales</taxon>
        <taxon>Bacteroidaceae</taxon>
        <taxon>Phocaeicola</taxon>
    </lineage>
</organism>
<name>METAA_PHOV8</name>
<sequence>MPLNLPDKLPAIELLKEENIFVIDNSRASAQDIRPLKIVILNLMPLKITTETDLVRLLSNTPLQLEISFMKLKSHTSKNTPVEHMKAFYHDFDLMRDEKYDGMIITGAPVEQMPYEDVNYWDEITTIFDWARTHVTSTLYICWAAQAGLYHFYGVPKYPLKQKMFGIFRHHINVQGLPIFRGFDDEFFVPHSRHTEIHREDILKVKELALIAESDESGVYMAMARNGREFFITGHSEYSPYTLDTEYKRDLAKGLPIEMPVNYYKDDNPDNAPVVRWRGHANLLFSNWLNYYVYQETPFDINQIR</sequence>
<reference key="1">
    <citation type="journal article" date="2007" name="PLoS Biol.">
        <title>Evolution of symbiotic bacteria in the distal human intestine.</title>
        <authorList>
            <person name="Xu J."/>
            <person name="Mahowald M.A."/>
            <person name="Ley R.E."/>
            <person name="Lozupone C.A."/>
            <person name="Hamady M."/>
            <person name="Martens E.C."/>
            <person name="Henrissat B."/>
            <person name="Coutinho P.M."/>
            <person name="Minx P."/>
            <person name="Latreille P."/>
            <person name="Cordum H."/>
            <person name="Van Brunt A."/>
            <person name="Kim K."/>
            <person name="Fulton R.S."/>
            <person name="Fulton L.A."/>
            <person name="Clifton S.W."/>
            <person name="Wilson R.K."/>
            <person name="Knight R.D."/>
            <person name="Gordon J.I."/>
        </authorList>
    </citation>
    <scope>NUCLEOTIDE SEQUENCE [LARGE SCALE GENOMIC DNA]</scope>
    <source>
        <strain>ATCC 8482 / DSM 1447 / JCM 5826 / CCUG 4940 / NBRC 14291 / NCTC 11154</strain>
    </source>
</reference>
<gene>
    <name evidence="1" type="primary">metAA</name>
    <name type="ordered locus">BVU_2042</name>
</gene>
<proteinExistence type="inferred from homology"/>
<evidence type="ECO:0000255" key="1">
    <source>
        <dbReference type="HAMAP-Rule" id="MF_00295"/>
    </source>
</evidence>
<feature type="chain" id="PRO_1000021801" description="Homoserine O-acetyltransferase">
    <location>
        <begin position="1"/>
        <end position="305"/>
    </location>
</feature>
<feature type="active site" description="Acyl-thioester intermediate" evidence="1">
    <location>
        <position position="142"/>
    </location>
</feature>
<feature type="active site" description="Proton acceptor" evidence="1">
    <location>
        <position position="235"/>
    </location>
</feature>
<feature type="active site" evidence="1">
    <location>
        <position position="237"/>
    </location>
</feature>
<feature type="binding site" evidence="1">
    <location>
        <position position="163"/>
    </location>
    <ligand>
        <name>substrate</name>
    </ligand>
</feature>
<feature type="binding site" evidence="1">
    <location>
        <position position="192"/>
    </location>
    <ligand>
        <name>substrate</name>
    </ligand>
</feature>
<feature type="binding site" evidence="1">
    <location>
        <position position="249"/>
    </location>
    <ligand>
        <name>substrate</name>
    </ligand>
</feature>
<feature type="site" description="Important for acyl-CoA specificity" evidence="1">
    <location>
        <position position="111"/>
    </location>
</feature>
<feature type="site" description="Important for substrate specificity" evidence="1">
    <location>
        <position position="192"/>
    </location>
</feature>
<protein>
    <recommendedName>
        <fullName evidence="1">Homoserine O-acetyltransferase</fullName>
        <shortName evidence="1">HAT</shortName>
        <ecNumber evidence="1">2.3.1.31</ecNumber>
    </recommendedName>
    <alternativeName>
        <fullName evidence="1">Homoserine transacetylase</fullName>
        <shortName evidence="1">HTA</shortName>
    </alternativeName>
</protein>